<proteinExistence type="evidence at transcript level"/>
<sequence length="507" mass="56705">MRKGGIQDAEPVEPPQSSRKSGTWFAKRPSEMPERHVERAPVRQKINNVGLYKATLYSNIGSFFFGIAVGWSGTAERSVMEQHSYSFQPTELQWSGVCILLTLGAALWCLPMGLMVRLLGCRRTILIQLLPNFLGWFLTVFARSVPMLYAGRFFLGMCGGAHCVVVPIYNAEISTTKKRGAMGVVFEGACICGVIYSFAMSLFLELRIINFVNLGLLALGPLQILMPESPAYYVDHGNIPRAEDSLRFLRGQKYDTRREIDFLTRDPTESEREVRQGPLLGFKYKKVRRSLARSLAIALLQKLCGALIFIFYGLNMLDCLRIRREFGLILCLGLILGFLACFFLVDRLGRRPLLIFSSAGIVFVSIYLGLHFKVWMTMGLTVMSWIALFCIAIFVGCYTAGVGSLTWVLNAELLVRPMRPLGCSIVCAFNWLTAFFVICWFGSHGVKCQPYLFLLFAIIASLILLFSLIYIPETKKLSSAKIQQRLGGLINRPAVITFTSSSDSSNA</sequence>
<name>GTR3_DROME</name>
<dbReference type="EMBL" id="U31961">
    <property type="protein sequence ID" value="AAA84407.1"/>
    <property type="molecule type" value="Genomic_DNA"/>
</dbReference>
<dbReference type="EMBL" id="AE014297">
    <property type="protein sequence ID" value="AAF55358.1"/>
    <property type="molecule type" value="Genomic_DNA"/>
</dbReference>
<dbReference type="EMBL" id="AY089263">
    <property type="protein sequence ID" value="AAL90001.1"/>
    <property type="molecule type" value="mRNA"/>
</dbReference>
<dbReference type="RefSeq" id="NP_536732.1">
    <property type="nucleotide sequence ID" value="NM_080484.3"/>
</dbReference>
<dbReference type="SMR" id="P53403"/>
<dbReference type="FunCoup" id="P53403">
    <property type="interactions" value="20"/>
</dbReference>
<dbReference type="STRING" id="7227.FBpp0082790"/>
<dbReference type="PaxDb" id="7227-FBpp0082790"/>
<dbReference type="EnsemblMetazoa" id="FBtr0083340">
    <property type="protein sequence ID" value="FBpp0082790"/>
    <property type="gene ID" value="FBgn0015230"/>
</dbReference>
<dbReference type="GeneID" id="42036"/>
<dbReference type="KEGG" id="dme:Dmel_CG3853"/>
<dbReference type="AGR" id="FB:FBgn0015230"/>
<dbReference type="CTD" id="42036"/>
<dbReference type="FlyBase" id="FBgn0015230">
    <property type="gene designation" value="Glut3"/>
</dbReference>
<dbReference type="VEuPathDB" id="VectorBase:FBgn0015230"/>
<dbReference type="eggNOG" id="KOG0254">
    <property type="taxonomic scope" value="Eukaryota"/>
</dbReference>
<dbReference type="GeneTree" id="ENSGT00940000173100"/>
<dbReference type="HOGENOM" id="CLU_001265_30_5_1"/>
<dbReference type="InParanoid" id="P53403"/>
<dbReference type="OMA" id="VCNFIPF"/>
<dbReference type="OrthoDB" id="4142200at2759"/>
<dbReference type="PhylomeDB" id="P53403"/>
<dbReference type="Reactome" id="R-DME-189200">
    <property type="pathway name" value="Cellular hexose transport"/>
</dbReference>
<dbReference type="GenomeRNAi" id="42036"/>
<dbReference type="PRO" id="PR:P53403"/>
<dbReference type="Proteomes" id="UP000000803">
    <property type="component" value="Chromosome 3R"/>
</dbReference>
<dbReference type="Bgee" id="FBgn0015230">
    <property type="expression patterns" value="Expressed in mid-late elongation-stage spermatid (Drosophila) in testis and 20 other cell types or tissues"/>
</dbReference>
<dbReference type="ExpressionAtlas" id="P53403">
    <property type="expression patterns" value="baseline and differential"/>
</dbReference>
<dbReference type="GO" id="GO:0042995">
    <property type="term" value="C:cell projection"/>
    <property type="evidence" value="ECO:0007669"/>
    <property type="project" value="UniProtKB-SubCell"/>
</dbReference>
<dbReference type="GO" id="GO:0016020">
    <property type="term" value="C:membrane"/>
    <property type="evidence" value="ECO:0000250"/>
    <property type="project" value="UniProtKB"/>
</dbReference>
<dbReference type="GO" id="GO:0043204">
    <property type="term" value="C:perikaryon"/>
    <property type="evidence" value="ECO:0007669"/>
    <property type="project" value="UniProtKB-SubCell"/>
</dbReference>
<dbReference type="GO" id="GO:0005886">
    <property type="term" value="C:plasma membrane"/>
    <property type="evidence" value="ECO:0000250"/>
    <property type="project" value="UniProtKB"/>
</dbReference>
<dbReference type="GO" id="GO:0005536">
    <property type="term" value="F:D-glucose binding"/>
    <property type="evidence" value="ECO:0000250"/>
    <property type="project" value="UniProtKB"/>
</dbReference>
<dbReference type="GO" id="GO:0055056">
    <property type="term" value="F:D-glucose transmembrane transporter activity"/>
    <property type="evidence" value="ECO:0000250"/>
    <property type="project" value="UniProtKB"/>
</dbReference>
<dbReference type="GO" id="GO:0022857">
    <property type="term" value="F:transmembrane transporter activity"/>
    <property type="evidence" value="ECO:0000318"/>
    <property type="project" value="GO_Central"/>
</dbReference>
<dbReference type="GO" id="GO:1904659">
    <property type="term" value="P:D-glucose transmembrane transport"/>
    <property type="evidence" value="ECO:0000250"/>
    <property type="project" value="UniProtKB"/>
</dbReference>
<dbReference type="GO" id="GO:0055085">
    <property type="term" value="P:transmembrane transport"/>
    <property type="evidence" value="ECO:0000318"/>
    <property type="project" value="GO_Central"/>
</dbReference>
<dbReference type="CDD" id="cd17358">
    <property type="entry name" value="MFS_GLUT6_8_Class3_like"/>
    <property type="match status" value="1"/>
</dbReference>
<dbReference type="FunFam" id="1.20.1250.20:FF:000218">
    <property type="entry name" value="facilitated trehalose transporter Tret1"/>
    <property type="match status" value="1"/>
</dbReference>
<dbReference type="Gene3D" id="1.20.1250.20">
    <property type="entry name" value="MFS general substrate transporter like domains"/>
    <property type="match status" value="1"/>
</dbReference>
<dbReference type="InterPro" id="IPR020846">
    <property type="entry name" value="MFS_dom"/>
</dbReference>
<dbReference type="InterPro" id="IPR044775">
    <property type="entry name" value="MFS_ERD6/Tret1-like"/>
</dbReference>
<dbReference type="InterPro" id="IPR005828">
    <property type="entry name" value="MFS_sugar_transport-like"/>
</dbReference>
<dbReference type="InterPro" id="IPR036259">
    <property type="entry name" value="MFS_trans_sf"/>
</dbReference>
<dbReference type="InterPro" id="IPR050549">
    <property type="entry name" value="MFS_Trehalose_Transporter"/>
</dbReference>
<dbReference type="InterPro" id="IPR005829">
    <property type="entry name" value="Sugar_transporter_CS"/>
</dbReference>
<dbReference type="PANTHER" id="PTHR48021">
    <property type="match status" value="1"/>
</dbReference>
<dbReference type="PANTHER" id="PTHR48021:SF1">
    <property type="entry name" value="GH07001P-RELATED"/>
    <property type="match status" value="1"/>
</dbReference>
<dbReference type="Pfam" id="PF00083">
    <property type="entry name" value="Sugar_tr"/>
    <property type="match status" value="1"/>
</dbReference>
<dbReference type="SUPFAM" id="SSF103473">
    <property type="entry name" value="MFS general substrate transporter"/>
    <property type="match status" value="1"/>
</dbReference>
<dbReference type="PROSITE" id="PS50850">
    <property type="entry name" value="MFS"/>
    <property type="match status" value="1"/>
</dbReference>
<dbReference type="PROSITE" id="PS00217">
    <property type="entry name" value="SUGAR_TRANSPORT_2"/>
    <property type="match status" value="1"/>
</dbReference>
<gene>
    <name type="primary">Glut3</name>
    <name type="synonym">glut-l</name>
    <name type="ORF">CG3853</name>
</gene>
<feature type="chain" id="PRO_0000050383" description="Glucose transporter type 3">
    <location>
        <begin position="1"/>
        <end position="507"/>
    </location>
</feature>
<feature type="topological domain" description="Cytoplasmic" evidence="3">
    <location>
        <begin position="1"/>
        <end position="53"/>
    </location>
</feature>
<feature type="transmembrane region" description="Helical; Name=1" evidence="3">
    <location>
        <begin position="54"/>
        <end position="74"/>
    </location>
</feature>
<feature type="topological domain" description="Extracellular" evidence="3">
    <location>
        <begin position="75"/>
        <end position="95"/>
    </location>
</feature>
<feature type="transmembrane region" description="Helical; Name=2" evidence="3">
    <location>
        <begin position="96"/>
        <end position="116"/>
    </location>
</feature>
<feature type="topological domain" description="Cytoplasmic" evidence="3">
    <location>
        <begin position="117"/>
        <end position="124"/>
    </location>
</feature>
<feature type="transmembrane region" description="Helical; Name=3" evidence="3">
    <location>
        <begin position="125"/>
        <end position="145"/>
    </location>
</feature>
<feature type="topological domain" description="Extracellular" evidence="3">
    <location>
        <begin position="146"/>
        <end position="152"/>
    </location>
</feature>
<feature type="transmembrane region" description="Helical; Name=4" evidence="3">
    <location>
        <begin position="153"/>
        <end position="173"/>
    </location>
</feature>
<feature type="topological domain" description="Cytoplasmic" evidence="3">
    <location>
        <begin position="174"/>
        <end position="183"/>
    </location>
</feature>
<feature type="transmembrane region" description="Helical; Name=5" evidence="3">
    <location>
        <begin position="184"/>
        <end position="204"/>
    </location>
</feature>
<feature type="topological domain" description="Extracellular" evidence="3">
    <location>
        <begin position="205"/>
        <end position="207"/>
    </location>
</feature>
<feature type="transmembrane region" description="Helical; Name=6" evidence="3">
    <location>
        <begin position="208"/>
        <end position="228"/>
    </location>
</feature>
<feature type="topological domain" description="Cytoplasmic" evidence="3">
    <location>
        <begin position="229"/>
        <end position="293"/>
    </location>
</feature>
<feature type="transmembrane region" description="Helical; Name=7" evidence="3">
    <location>
        <begin position="294"/>
        <end position="314"/>
    </location>
</feature>
<feature type="topological domain" description="Extracellular" evidence="3">
    <location>
        <begin position="315"/>
        <end position="324"/>
    </location>
</feature>
<feature type="transmembrane region" description="Helical; Name=8" evidence="3">
    <location>
        <begin position="325"/>
        <end position="345"/>
    </location>
</feature>
<feature type="topological domain" description="Cytoplasmic" evidence="3">
    <location>
        <begin position="346"/>
        <end position="351"/>
    </location>
</feature>
<feature type="transmembrane region" description="Helical; Name=9" evidence="3">
    <location>
        <begin position="352"/>
        <end position="372"/>
    </location>
</feature>
<feature type="topological domain" description="Extracellular" evidence="3">
    <location>
        <begin position="373"/>
        <end position="374"/>
    </location>
</feature>
<feature type="transmembrane region" description="Helical; Name=10" evidence="3">
    <location>
        <begin position="375"/>
        <end position="395"/>
    </location>
</feature>
<feature type="topological domain" description="Cytoplasmic" evidence="3">
    <location>
        <begin position="396"/>
        <end position="420"/>
    </location>
</feature>
<feature type="transmembrane region" description="Helical; Name=11" evidence="3">
    <location>
        <begin position="421"/>
        <end position="441"/>
    </location>
</feature>
<feature type="topological domain" description="Extracellular" evidence="3">
    <location>
        <begin position="442"/>
        <end position="450"/>
    </location>
</feature>
<feature type="transmembrane region" description="Helical; Name=12" evidence="3">
    <location>
        <begin position="451"/>
        <end position="471"/>
    </location>
</feature>
<feature type="topological domain" description="Cytoplasmic" evidence="3">
    <location>
        <begin position="472"/>
        <end position="507"/>
    </location>
</feature>
<feature type="region of interest" description="Disordered" evidence="4">
    <location>
        <begin position="1"/>
        <end position="26"/>
    </location>
</feature>
<feature type="sequence conflict" description="In Ref. 4; AAL90001." evidence="5" ref="4">
    <original>ER</original>
    <variation>VE</variation>
    <location>
        <begin position="34"/>
        <end position="35"/>
    </location>
</feature>
<keyword id="KW-1003">Cell membrane</keyword>
<keyword id="KW-0966">Cell projection</keyword>
<keyword id="KW-0472">Membrane</keyword>
<keyword id="KW-1185">Reference proteome</keyword>
<keyword id="KW-0762">Sugar transport</keyword>
<keyword id="KW-0812">Transmembrane</keyword>
<keyword id="KW-1133">Transmembrane helix</keyword>
<keyword id="KW-0813">Transport</keyword>
<evidence type="ECO:0000250" key="1">
    <source>
        <dbReference type="UniProtKB" id="P11169"/>
    </source>
</evidence>
<evidence type="ECO:0000250" key="2">
    <source>
        <dbReference type="UniProtKB" id="Q07647"/>
    </source>
</evidence>
<evidence type="ECO:0000255" key="3"/>
<evidence type="ECO:0000256" key="4">
    <source>
        <dbReference type="SAM" id="MobiDB-lite"/>
    </source>
</evidence>
<evidence type="ECO:0000305" key="5"/>
<reference key="1">
    <citation type="journal article" date="1995" name="Proc. Natl. Acad. Sci. U.S.A.">
        <title>Complete sequence of the bithorax complex of Drosophila.</title>
        <authorList>
            <person name="Martin C.H."/>
            <person name="Mayeda C.A."/>
            <person name="Davis C.A."/>
            <person name="Ericsson C.L."/>
            <person name="Knafels J.D."/>
            <person name="Mathog D.R."/>
            <person name="Celniker S.E."/>
            <person name="Lewis E.B."/>
            <person name="Palazzolo M.J."/>
        </authorList>
    </citation>
    <scope>NUCLEOTIDE SEQUENCE [GENOMIC DNA]</scope>
    <source>
        <strain>Canton-S</strain>
    </source>
</reference>
<reference key="2">
    <citation type="journal article" date="2000" name="Science">
        <title>The genome sequence of Drosophila melanogaster.</title>
        <authorList>
            <person name="Adams M.D."/>
            <person name="Celniker S.E."/>
            <person name="Holt R.A."/>
            <person name="Evans C.A."/>
            <person name="Gocayne J.D."/>
            <person name="Amanatides P.G."/>
            <person name="Scherer S.E."/>
            <person name="Li P.W."/>
            <person name="Hoskins R.A."/>
            <person name="Galle R.F."/>
            <person name="George R.A."/>
            <person name="Lewis S.E."/>
            <person name="Richards S."/>
            <person name="Ashburner M."/>
            <person name="Henderson S.N."/>
            <person name="Sutton G.G."/>
            <person name="Wortman J.R."/>
            <person name="Yandell M.D."/>
            <person name="Zhang Q."/>
            <person name="Chen L.X."/>
            <person name="Brandon R.C."/>
            <person name="Rogers Y.-H.C."/>
            <person name="Blazej R.G."/>
            <person name="Champe M."/>
            <person name="Pfeiffer B.D."/>
            <person name="Wan K.H."/>
            <person name="Doyle C."/>
            <person name="Baxter E.G."/>
            <person name="Helt G."/>
            <person name="Nelson C.R."/>
            <person name="Miklos G.L.G."/>
            <person name="Abril J.F."/>
            <person name="Agbayani A."/>
            <person name="An H.-J."/>
            <person name="Andrews-Pfannkoch C."/>
            <person name="Baldwin D."/>
            <person name="Ballew R.M."/>
            <person name="Basu A."/>
            <person name="Baxendale J."/>
            <person name="Bayraktaroglu L."/>
            <person name="Beasley E.M."/>
            <person name="Beeson K.Y."/>
            <person name="Benos P.V."/>
            <person name="Berman B.P."/>
            <person name="Bhandari D."/>
            <person name="Bolshakov S."/>
            <person name="Borkova D."/>
            <person name="Botchan M.R."/>
            <person name="Bouck J."/>
            <person name="Brokstein P."/>
            <person name="Brottier P."/>
            <person name="Burtis K.C."/>
            <person name="Busam D.A."/>
            <person name="Butler H."/>
            <person name="Cadieu E."/>
            <person name="Center A."/>
            <person name="Chandra I."/>
            <person name="Cherry J.M."/>
            <person name="Cawley S."/>
            <person name="Dahlke C."/>
            <person name="Davenport L.B."/>
            <person name="Davies P."/>
            <person name="de Pablos B."/>
            <person name="Delcher A."/>
            <person name="Deng Z."/>
            <person name="Mays A.D."/>
            <person name="Dew I."/>
            <person name="Dietz S.M."/>
            <person name="Dodson K."/>
            <person name="Doup L.E."/>
            <person name="Downes M."/>
            <person name="Dugan-Rocha S."/>
            <person name="Dunkov B.C."/>
            <person name="Dunn P."/>
            <person name="Durbin K.J."/>
            <person name="Evangelista C.C."/>
            <person name="Ferraz C."/>
            <person name="Ferriera S."/>
            <person name="Fleischmann W."/>
            <person name="Fosler C."/>
            <person name="Gabrielian A.E."/>
            <person name="Garg N.S."/>
            <person name="Gelbart W.M."/>
            <person name="Glasser K."/>
            <person name="Glodek A."/>
            <person name="Gong F."/>
            <person name="Gorrell J.H."/>
            <person name="Gu Z."/>
            <person name="Guan P."/>
            <person name="Harris M."/>
            <person name="Harris N.L."/>
            <person name="Harvey D.A."/>
            <person name="Heiman T.J."/>
            <person name="Hernandez J.R."/>
            <person name="Houck J."/>
            <person name="Hostin D."/>
            <person name="Houston K.A."/>
            <person name="Howland T.J."/>
            <person name="Wei M.-H."/>
            <person name="Ibegwam C."/>
            <person name="Jalali M."/>
            <person name="Kalush F."/>
            <person name="Karpen G.H."/>
            <person name="Ke Z."/>
            <person name="Kennison J.A."/>
            <person name="Ketchum K.A."/>
            <person name="Kimmel B.E."/>
            <person name="Kodira C.D."/>
            <person name="Kraft C.L."/>
            <person name="Kravitz S."/>
            <person name="Kulp D."/>
            <person name="Lai Z."/>
            <person name="Lasko P."/>
            <person name="Lei Y."/>
            <person name="Levitsky A.A."/>
            <person name="Li J.H."/>
            <person name="Li Z."/>
            <person name="Liang Y."/>
            <person name="Lin X."/>
            <person name="Liu X."/>
            <person name="Mattei B."/>
            <person name="McIntosh T.C."/>
            <person name="McLeod M.P."/>
            <person name="McPherson D."/>
            <person name="Merkulov G."/>
            <person name="Milshina N.V."/>
            <person name="Mobarry C."/>
            <person name="Morris J."/>
            <person name="Moshrefi A."/>
            <person name="Mount S.M."/>
            <person name="Moy M."/>
            <person name="Murphy B."/>
            <person name="Murphy L."/>
            <person name="Muzny D.M."/>
            <person name="Nelson D.L."/>
            <person name="Nelson D.R."/>
            <person name="Nelson K.A."/>
            <person name="Nixon K."/>
            <person name="Nusskern D.R."/>
            <person name="Pacleb J.M."/>
            <person name="Palazzolo M."/>
            <person name="Pittman G.S."/>
            <person name="Pan S."/>
            <person name="Pollard J."/>
            <person name="Puri V."/>
            <person name="Reese M.G."/>
            <person name="Reinert K."/>
            <person name="Remington K."/>
            <person name="Saunders R.D.C."/>
            <person name="Scheeler F."/>
            <person name="Shen H."/>
            <person name="Shue B.C."/>
            <person name="Siden-Kiamos I."/>
            <person name="Simpson M."/>
            <person name="Skupski M.P."/>
            <person name="Smith T.J."/>
            <person name="Spier E."/>
            <person name="Spradling A.C."/>
            <person name="Stapleton M."/>
            <person name="Strong R."/>
            <person name="Sun E."/>
            <person name="Svirskas R."/>
            <person name="Tector C."/>
            <person name="Turner R."/>
            <person name="Venter E."/>
            <person name="Wang A.H."/>
            <person name="Wang X."/>
            <person name="Wang Z.-Y."/>
            <person name="Wassarman D.A."/>
            <person name="Weinstock G.M."/>
            <person name="Weissenbach J."/>
            <person name="Williams S.M."/>
            <person name="Woodage T."/>
            <person name="Worley K.C."/>
            <person name="Wu D."/>
            <person name="Yang S."/>
            <person name="Yao Q.A."/>
            <person name="Ye J."/>
            <person name="Yeh R.-F."/>
            <person name="Zaveri J.S."/>
            <person name="Zhan M."/>
            <person name="Zhang G."/>
            <person name="Zhao Q."/>
            <person name="Zheng L."/>
            <person name="Zheng X.H."/>
            <person name="Zhong F.N."/>
            <person name="Zhong W."/>
            <person name="Zhou X."/>
            <person name="Zhu S.C."/>
            <person name="Zhu X."/>
            <person name="Smith H.O."/>
            <person name="Gibbs R.A."/>
            <person name="Myers E.W."/>
            <person name="Rubin G.M."/>
            <person name="Venter J.C."/>
        </authorList>
    </citation>
    <scope>NUCLEOTIDE SEQUENCE [LARGE SCALE GENOMIC DNA]</scope>
    <source>
        <strain>Berkeley</strain>
    </source>
</reference>
<reference key="3">
    <citation type="journal article" date="2002" name="Genome Biol.">
        <title>Annotation of the Drosophila melanogaster euchromatic genome: a systematic review.</title>
        <authorList>
            <person name="Misra S."/>
            <person name="Crosby M.A."/>
            <person name="Mungall C.J."/>
            <person name="Matthews B.B."/>
            <person name="Campbell K.S."/>
            <person name="Hradecky P."/>
            <person name="Huang Y."/>
            <person name="Kaminker J.S."/>
            <person name="Millburn G.H."/>
            <person name="Prochnik S.E."/>
            <person name="Smith C.D."/>
            <person name="Tupy J.L."/>
            <person name="Whitfield E.J."/>
            <person name="Bayraktaroglu L."/>
            <person name="Berman B.P."/>
            <person name="Bettencourt B.R."/>
            <person name="Celniker S.E."/>
            <person name="de Grey A.D.N.J."/>
            <person name="Drysdale R.A."/>
            <person name="Harris N.L."/>
            <person name="Richter J."/>
            <person name="Russo S."/>
            <person name="Schroeder A.J."/>
            <person name="Shu S.Q."/>
            <person name="Stapleton M."/>
            <person name="Yamada C."/>
            <person name="Ashburner M."/>
            <person name="Gelbart W.M."/>
            <person name="Rubin G.M."/>
            <person name="Lewis S.E."/>
        </authorList>
    </citation>
    <scope>GENOME REANNOTATION</scope>
    <source>
        <strain>Berkeley</strain>
    </source>
</reference>
<reference key="4">
    <citation type="journal article" date="2002" name="Genome Biol.">
        <title>A Drosophila full-length cDNA resource.</title>
        <authorList>
            <person name="Stapleton M."/>
            <person name="Carlson J.W."/>
            <person name="Brokstein P."/>
            <person name="Yu C."/>
            <person name="Champe M."/>
            <person name="George R.A."/>
            <person name="Guarin H."/>
            <person name="Kronmiller B."/>
            <person name="Pacleb J.M."/>
            <person name="Park S."/>
            <person name="Wan K.H."/>
            <person name="Rubin G.M."/>
            <person name="Celniker S.E."/>
        </authorList>
    </citation>
    <scope>NUCLEOTIDE SEQUENCE [LARGE SCALE MRNA]</scope>
    <source>
        <strain>Berkeley</strain>
        <tissue>Testis</tissue>
    </source>
</reference>
<accession>P53403</accession>
<accession>Q8T4C0</accession>
<accession>Q9VER2</accession>
<protein>
    <recommendedName>
        <fullName>Glucose transporter type 3</fullName>
    </recommendedName>
    <alternativeName>
        <fullName>Glucose transporter-like protein</fullName>
    </alternativeName>
</protein>
<organism>
    <name type="scientific">Drosophila melanogaster</name>
    <name type="common">Fruit fly</name>
    <dbReference type="NCBI Taxonomy" id="7227"/>
    <lineage>
        <taxon>Eukaryota</taxon>
        <taxon>Metazoa</taxon>
        <taxon>Ecdysozoa</taxon>
        <taxon>Arthropoda</taxon>
        <taxon>Hexapoda</taxon>
        <taxon>Insecta</taxon>
        <taxon>Pterygota</taxon>
        <taxon>Neoptera</taxon>
        <taxon>Endopterygota</taxon>
        <taxon>Diptera</taxon>
        <taxon>Brachycera</taxon>
        <taxon>Muscomorpha</taxon>
        <taxon>Ephydroidea</taxon>
        <taxon>Drosophilidae</taxon>
        <taxon>Drosophila</taxon>
        <taxon>Sophophora</taxon>
    </lineage>
</organism>
<comment type="function">
    <text evidence="1">Facilitative glucose transporter that can also mediate the uptake of various other monosaccharides across the cell membrane.</text>
</comment>
<comment type="subcellular location">
    <subcellularLocation>
        <location evidence="1">Cell membrane</location>
        <topology evidence="1">Multi-pass membrane protein</topology>
    </subcellularLocation>
    <subcellularLocation>
        <location evidence="2">Perikaryon</location>
    </subcellularLocation>
    <subcellularLocation>
        <location evidence="2">Cell projection</location>
    </subcellularLocation>
    <text evidence="2">Localized to densely spaced patches along neuronal processes.</text>
</comment>
<comment type="domain">
    <text evidence="1">Transport is mediated via a series of conformation changes, switching between a conformation where the substrate-binding cavity is accessible from the outside, and a another conformation where it is accessible from the cytoplasm.</text>
</comment>
<comment type="similarity">
    <text evidence="5">Belongs to the major facilitator superfamily. Sugar transporter (TC 2.A.1.1) family. Glucose transporter subfamily.</text>
</comment>